<gene>
    <name evidence="1" type="primary">rsgA</name>
    <name type="ordered locus">CKR_1272</name>
</gene>
<feature type="chain" id="PRO_1000188054" description="Small ribosomal subunit biogenesis GTPase RsgA">
    <location>
        <begin position="1"/>
        <end position="287"/>
    </location>
</feature>
<feature type="domain" description="CP-type G" evidence="2">
    <location>
        <begin position="61"/>
        <end position="218"/>
    </location>
</feature>
<feature type="binding site" evidence="1">
    <location>
        <begin position="110"/>
        <end position="113"/>
    </location>
    <ligand>
        <name>GTP</name>
        <dbReference type="ChEBI" id="CHEBI:37565"/>
    </ligand>
</feature>
<feature type="binding site" evidence="1">
    <location>
        <begin position="161"/>
        <end position="169"/>
    </location>
    <ligand>
        <name>GTP</name>
        <dbReference type="ChEBI" id="CHEBI:37565"/>
    </ligand>
</feature>
<feature type="binding site" evidence="1">
    <location>
        <position position="242"/>
    </location>
    <ligand>
        <name>Zn(2+)</name>
        <dbReference type="ChEBI" id="CHEBI:29105"/>
    </ligand>
</feature>
<feature type="binding site" evidence="1">
    <location>
        <position position="247"/>
    </location>
    <ligand>
        <name>Zn(2+)</name>
        <dbReference type="ChEBI" id="CHEBI:29105"/>
    </ligand>
</feature>
<feature type="binding site" evidence="1">
    <location>
        <position position="249"/>
    </location>
    <ligand>
        <name>Zn(2+)</name>
        <dbReference type="ChEBI" id="CHEBI:29105"/>
    </ligand>
</feature>
<feature type="binding site" evidence="1">
    <location>
        <position position="255"/>
    </location>
    <ligand>
        <name>Zn(2+)</name>
        <dbReference type="ChEBI" id="CHEBI:29105"/>
    </ligand>
</feature>
<comment type="function">
    <text evidence="1">One of several proteins that assist in the late maturation steps of the functional core of the 30S ribosomal subunit. Helps release RbfA from mature subunits. May play a role in the assembly of ribosomal proteins into the subunit. Circularly permuted GTPase that catalyzes slow GTP hydrolysis, GTPase activity is stimulated by the 30S ribosomal subunit.</text>
</comment>
<comment type="cofactor">
    <cofactor evidence="1">
        <name>Zn(2+)</name>
        <dbReference type="ChEBI" id="CHEBI:29105"/>
    </cofactor>
    <text evidence="1">Binds 1 zinc ion per subunit.</text>
</comment>
<comment type="subunit">
    <text evidence="1">Monomer. Associates with 30S ribosomal subunit, binds 16S rRNA.</text>
</comment>
<comment type="subcellular location">
    <subcellularLocation>
        <location evidence="1">Cytoplasm</location>
    </subcellularLocation>
</comment>
<comment type="similarity">
    <text evidence="1">Belongs to the TRAFAC class YlqF/YawG GTPase family. RsgA subfamily.</text>
</comment>
<sequence>MRGTIMKGIGGFYYVNTDRGIIECRARGKFRYNGLFPMVGDKVEIKLERDQGIIDEICPRISQLKRPAVANVTQALVVFAFNHPEINEDLLNKFLISCEFNNLKPIVCFNKLDLADKEKKLDVIDMIRNTGYEVIFLKAKEGYGIDKVREKLKDNITVLCGPSGVGKSTILNAIYGKELMETGQISHKLNRGKHTTRHSEIIELEDGFMVDTPGFSSLDIGHITKDKLQYCFPEFIEFIGICKFTGCVHHKEPDCAVKSALYDDKINKRRYDFYVKTLNEISSKKKY</sequence>
<evidence type="ECO:0000255" key="1">
    <source>
        <dbReference type="HAMAP-Rule" id="MF_01820"/>
    </source>
</evidence>
<evidence type="ECO:0000255" key="2">
    <source>
        <dbReference type="PROSITE-ProRule" id="PRU01058"/>
    </source>
</evidence>
<proteinExistence type="inferred from homology"/>
<name>RSGA_CLOK1</name>
<keyword id="KW-0963">Cytoplasm</keyword>
<keyword id="KW-0342">GTP-binding</keyword>
<keyword id="KW-0378">Hydrolase</keyword>
<keyword id="KW-0479">Metal-binding</keyword>
<keyword id="KW-0547">Nucleotide-binding</keyword>
<keyword id="KW-0690">Ribosome biogenesis</keyword>
<keyword id="KW-0694">RNA-binding</keyword>
<keyword id="KW-0699">rRNA-binding</keyword>
<keyword id="KW-0862">Zinc</keyword>
<organism>
    <name type="scientific">Clostridium kluyveri (strain NBRC 12016)</name>
    <dbReference type="NCBI Taxonomy" id="583346"/>
    <lineage>
        <taxon>Bacteria</taxon>
        <taxon>Bacillati</taxon>
        <taxon>Bacillota</taxon>
        <taxon>Clostridia</taxon>
        <taxon>Eubacteriales</taxon>
        <taxon>Clostridiaceae</taxon>
        <taxon>Clostridium</taxon>
    </lineage>
</organism>
<dbReference type="EC" id="3.6.1.-" evidence="1"/>
<dbReference type="EMBL" id="AP009049">
    <property type="protein sequence ID" value="BAH06323.1"/>
    <property type="molecule type" value="Genomic_DNA"/>
</dbReference>
<dbReference type="RefSeq" id="WP_012101765.1">
    <property type="nucleotide sequence ID" value="NC_011837.1"/>
</dbReference>
<dbReference type="SMR" id="B9E1E8"/>
<dbReference type="KEGG" id="ckr:CKR_1272"/>
<dbReference type="HOGENOM" id="CLU_033617_2_1_9"/>
<dbReference type="Proteomes" id="UP000007969">
    <property type="component" value="Chromosome"/>
</dbReference>
<dbReference type="GO" id="GO:0005737">
    <property type="term" value="C:cytoplasm"/>
    <property type="evidence" value="ECO:0007669"/>
    <property type="project" value="UniProtKB-SubCell"/>
</dbReference>
<dbReference type="GO" id="GO:0005525">
    <property type="term" value="F:GTP binding"/>
    <property type="evidence" value="ECO:0007669"/>
    <property type="project" value="UniProtKB-UniRule"/>
</dbReference>
<dbReference type="GO" id="GO:0003924">
    <property type="term" value="F:GTPase activity"/>
    <property type="evidence" value="ECO:0007669"/>
    <property type="project" value="UniProtKB-UniRule"/>
</dbReference>
<dbReference type="GO" id="GO:0046872">
    <property type="term" value="F:metal ion binding"/>
    <property type="evidence" value="ECO:0007669"/>
    <property type="project" value="UniProtKB-KW"/>
</dbReference>
<dbReference type="GO" id="GO:0019843">
    <property type="term" value="F:rRNA binding"/>
    <property type="evidence" value="ECO:0007669"/>
    <property type="project" value="UniProtKB-KW"/>
</dbReference>
<dbReference type="GO" id="GO:0042274">
    <property type="term" value="P:ribosomal small subunit biogenesis"/>
    <property type="evidence" value="ECO:0007669"/>
    <property type="project" value="UniProtKB-UniRule"/>
</dbReference>
<dbReference type="CDD" id="cd04466">
    <property type="entry name" value="S1_YloQ_GTPase"/>
    <property type="match status" value="1"/>
</dbReference>
<dbReference type="CDD" id="cd01854">
    <property type="entry name" value="YjeQ_EngC"/>
    <property type="match status" value="1"/>
</dbReference>
<dbReference type="Gene3D" id="2.40.50.140">
    <property type="entry name" value="Nucleic acid-binding proteins"/>
    <property type="match status" value="1"/>
</dbReference>
<dbReference type="Gene3D" id="3.40.50.300">
    <property type="entry name" value="P-loop containing nucleotide triphosphate hydrolases"/>
    <property type="match status" value="1"/>
</dbReference>
<dbReference type="Gene3D" id="1.10.40.50">
    <property type="entry name" value="Probable gtpase engc, domain 3"/>
    <property type="match status" value="1"/>
</dbReference>
<dbReference type="HAMAP" id="MF_01820">
    <property type="entry name" value="GTPase_RsgA"/>
    <property type="match status" value="1"/>
</dbReference>
<dbReference type="InterPro" id="IPR030378">
    <property type="entry name" value="G_CP_dom"/>
</dbReference>
<dbReference type="InterPro" id="IPR012340">
    <property type="entry name" value="NA-bd_OB-fold"/>
</dbReference>
<dbReference type="InterPro" id="IPR027417">
    <property type="entry name" value="P-loop_NTPase"/>
</dbReference>
<dbReference type="InterPro" id="IPR004881">
    <property type="entry name" value="Ribosome_biogen_GTPase_RsgA"/>
</dbReference>
<dbReference type="InterPro" id="IPR010914">
    <property type="entry name" value="RsgA_GTPase_dom"/>
</dbReference>
<dbReference type="InterPro" id="IPR031944">
    <property type="entry name" value="RsgA_N"/>
</dbReference>
<dbReference type="NCBIfam" id="TIGR00157">
    <property type="entry name" value="ribosome small subunit-dependent GTPase A"/>
    <property type="match status" value="1"/>
</dbReference>
<dbReference type="PANTHER" id="PTHR32120">
    <property type="entry name" value="SMALL RIBOSOMAL SUBUNIT BIOGENESIS GTPASE RSGA"/>
    <property type="match status" value="1"/>
</dbReference>
<dbReference type="PANTHER" id="PTHR32120:SF11">
    <property type="entry name" value="SMALL RIBOSOMAL SUBUNIT BIOGENESIS GTPASE RSGA 1, MITOCHONDRIAL-RELATED"/>
    <property type="match status" value="1"/>
</dbReference>
<dbReference type="Pfam" id="PF03193">
    <property type="entry name" value="RsgA_GTPase"/>
    <property type="match status" value="1"/>
</dbReference>
<dbReference type="Pfam" id="PF16745">
    <property type="entry name" value="RsgA_N"/>
    <property type="match status" value="1"/>
</dbReference>
<dbReference type="SUPFAM" id="SSF50249">
    <property type="entry name" value="Nucleic acid-binding proteins"/>
    <property type="match status" value="1"/>
</dbReference>
<dbReference type="SUPFAM" id="SSF52540">
    <property type="entry name" value="P-loop containing nucleoside triphosphate hydrolases"/>
    <property type="match status" value="1"/>
</dbReference>
<dbReference type="PROSITE" id="PS50936">
    <property type="entry name" value="ENGC_GTPASE"/>
    <property type="match status" value="1"/>
</dbReference>
<dbReference type="PROSITE" id="PS51721">
    <property type="entry name" value="G_CP"/>
    <property type="match status" value="1"/>
</dbReference>
<protein>
    <recommendedName>
        <fullName evidence="1">Small ribosomal subunit biogenesis GTPase RsgA</fullName>
        <ecNumber evidence="1">3.6.1.-</ecNumber>
    </recommendedName>
</protein>
<reference key="1">
    <citation type="submission" date="2005-09" db="EMBL/GenBank/DDBJ databases">
        <title>Complete genome sequence of Clostridium kluyveri and comparative genomics of Clostridia species.</title>
        <authorList>
            <person name="Inui M."/>
            <person name="Nonaka H."/>
            <person name="Shinoda Y."/>
            <person name="Ikenaga Y."/>
            <person name="Abe M."/>
            <person name="Naito K."/>
            <person name="Vertes A.A."/>
            <person name="Yukawa H."/>
        </authorList>
    </citation>
    <scope>NUCLEOTIDE SEQUENCE [LARGE SCALE GENOMIC DNA]</scope>
    <source>
        <strain>NBRC 12016</strain>
    </source>
</reference>
<accession>B9E1E8</accession>